<accession>Q2NS01</accession>
<sequence>MTSTFQTIGIVGHPRHPNALATHETLYHWLNEKGYHVIMEHQIARYLALHEAITGSLADIGQQADLAIVIGGDGNMLGAARILARYDIKVIGINRGNLGFLTDLDPDSALAQLSDVLAGHFRSEKRFLLEAQVCRGDVCGRLSSSINEVVLHPGKVAHMIEFEVYIDDTFAFSQRSDGLIIATPTGSTAYSLSAGGPILTPLVDAIALVPMFPHTLSSRPLVINGGSTIRLKFSQLTPDLEISCDSQIALPIQDGEEIFIRRSDYYLDLIHPNDYNYFNTLSSKLGWSKKLF</sequence>
<dbReference type="EC" id="2.7.1.23" evidence="1"/>
<dbReference type="EMBL" id="AP008232">
    <property type="protein sequence ID" value="BAE75074.1"/>
    <property type="molecule type" value="Genomic_DNA"/>
</dbReference>
<dbReference type="RefSeq" id="WP_011411623.1">
    <property type="nucleotide sequence ID" value="NC_007712.1"/>
</dbReference>
<dbReference type="SMR" id="Q2NS01"/>
<dbReference type="STRING" id="343509.SG1799"/>
<dbReference type="KEGG" id="sgl:SG1799"/>
<dbReference type="eggNOG" id="COG0061">
    <property type="taxonomic scope" value="Bacteria"/>
</dbReference>
<dbReference type="HOGENOM" id="CLU_008831_0_1_6"/>
<dbReference type="OrthoDB" id="9774737at2"/>
<dbReference type="BioCyc" id="SGLO343509:SGP1_RS16285-MONOMER"/>
<dbReference type="Proteomes" id="UP000001932">
    <property type="component" value="Chromosome"/>
</dbReference>
<dbReference type="GO" id="GO:0005737">
    <property type="term" value="C:cytoplasm"/>
    <property type="evidence" value="ECO:0007669"/>
    <property type="project" value="UniProtKB-SubCell"/>
</dbReference>
<dbReference type="GO" id="GO:0005524">
    <property type="term" value="F:ATP binding"/>
    <property type="evidence" value="ECO:0007669"/>
    <property type="project" value="UniProtKB-KW"/>
</dbReference>
<dbReference type="GO" id="GO:0046872">
    <property type="term" value="F:metal ion binding"/>
    <property type="evidence" value="ECO:0007669"/>
    <property type="project" value="UniProtKB-UniRule"/>
</dbReference>
<dbReference type="GO" id="GO:0051287">
    <property type="term" value="F:NAD binding"/>
    <property type="evidence" value="ECO:0007669"/>
    <property type="project" value="UniProtKB-ARBA"/>
</dbReference>
<dbReference type="GO" id="GO:0003951">
    <property type="term" value="F:NAD+ kinase activity"/>
    <property type="evidence" value="ECO:0007669"/>
    <property type="project" value="UniProtKB-UniRule"/>
</dbReference>
<dbReference type="GO" id="GO:0019674">
    <property type="term" value="P:NAD metabolic process"/>
    <property type="evidence" value="ECO:0007669"/>
    <property type="project" value="InterPro"/>
</dbReference>
<dbReference type="GO" id="GO:0006741">
    <property type="term" value="P:NADP biosynthetic process"/>
    <property type="evidence" value="ECO:0007669"/>
    <property type="project" value="UniProtKB-UniRule"/>
</dbReference>
<dbReference type="FunFam" id="2.60.200.30:FF:000001">
    <property type="entry name" value="NAD kinase"/>
    <property type="match status" value="1"/>
</dbReference>
<dbReference type="FunFam" id="3.40.50.10330:FF:000004">
    <property type="entry name" value="NAD kinase"/>
    <property type="match status" value="1"/>
</dbReference>
<dbReference type="Gene3D" id="3.40.50.10330">
    <property type="entry name" value="Probable inorganic polyphosphate/atp-NAD kinase, domain 1"/>
    <property type="match status" value="1"/>
</dbReference>
<dbReference type="Gene3D" id="2.60.200.30">
    <property type="entry name" value="Probable inorganic polyphosphate/atp-NAD kinase, domain 2"/>
    <property type="match status" value="1"/>
</dbReference>
<dbReference type="HAMAP" id="MF_00361">
    <property type="entry name" value="NAD_kinase"/>
    <property type="match status" value="1"/>
</dbReference>
<dbReference type="InterPro" id="IPR017438">
    <property type="entry name" value="ATP-NAD_kinase_N"/>
</dbReference>
<dbReference type="InterPro" id="IPR017437">
    <property type="entry name" value="ATP-NAD_kinase_PpnK-typ_C"/>
</dbReference>
<dbReference type="InterPro" id="IPR016064">
    <property type="entry name" value="NAD/diacylglycerol_kinase_sf"/>
</dbReference>
<dbReference type="InterPro" id="IPR002504">
    <property type="entry name" value="NADK"/>
</dbReference>
<dbReference type="NCBIfam" id="NF002306">
    <property type="entry name" value="PRK01231.1"/>
    <property type="match status" value="1"/>
</dbReference>
<dbReference type="NCBIfam" id="NF002893">
    <property type="entry name" value="PRK03378.1"/>
    <property type="match status" value="1"/>
</dbReference>
<dbReference type="PANTHER" id="PTHR20275">
    <property type="entry name" value="NAD KINASE"/>
    <property type="match status" value="1"/>
</dbReference>
<dbReference type="PANTHER" id="PTHR20275:SF0">
    <property type="entry name" value="NAD KINASE"/>
    <property type="match status" value="1"/>
</dbReference>
<dbReference type="Pfam" id="PF01513">
    <property type="entry name" value="NAD_kinase"/>
    <property type="match status" value="1"/>
</dbReference>
<dbReference type="Pfam" id="PF20143">
    <property type="entry name" value="NAD_kinase_C"/>
    <property type="match status" value="1"/>
</dbReference>
<dbReference type="SUPFAM" id="SSF111331">
    <property type="entry name" value="NAD kinase/diacylglycerol kinase-like"/>
    <property type="match status" value="1"/>
</dbReference>
<feature type="chain" id="PRO_1000079521" description="NAD kinase">
    <location>
        <begin position="1"/>
        <end position="292"/>
    </location>
</feature>
<feature type="active site" description="Proton acceptor" evidence="1">
    <location>
        <position position="73"/>
    </location>
</feature>
<feature type="binding site" evidence="1">
    <location>
        <begin position="73"/>
        <end position="74"/>
    </location>
    <ligand>
        <name>NAD(+)</name>
        <dbReference type="ChEBI" id="CHEBI:57540"/>
    </ligand>
</feature>
<feature type="binding site" evidence="1">
    <location>
        <begin position="147"/>
        <end position="148"/>
    </location>
    <ligand>
        <name>NAD(+)</name>
        <dbReference type="ChEBI" id="CHEBI:57540"/>
    </ligand>
</feature>
<feature type="binding site" evidence="1">
    <location>
        <position position="158"/>
    </location>
    <ligand>
        <name>NAD(+)</name>
        <dbReference type="ChEBI" id="CHEBI:57540"/>
    </ligand>
</feature>
<feature type="binding site" evidence="1">
    <location>
        <position position="175"/>
    </location>
    <ligand>
        <name>NAD(+)</name>
        <dbReference type="ChEBI" id="CHEBI:57540"/>
    </ligand>
</feature>
<feature type="binding site" evidence="1">
    <location>
        <position position="177"/>
    </location>
    <ligand>
        <name>NAD(+)</name>
        <dbReference type="ChEBI" id="CHEBI:57540"/>
    </ligand>
</feature>
<feature type="binding site" evidence="1">
    <location>
        <begin position="188"/>
        <end position="193"/>
    </location>
    <ligand>
        <name>NAD(+)</name>
        <dbReference type="ChEBI" id="CHEBI:57540"/>
    </ligand>
</feature>
<feature type="binding site" evidence="1">
    <location>
        <position position="247"/>
    </location>
    <ligand>
        <name>NAD(+)</name>
        <dbReference type="ChEBI" id="CHEBI:57540"/>
    </ligand>
</feature>
<gene>
    <name evidence="1" type="primary">nadK</name>
    <name type="ordered locus">SG1799</name>
</gene>
<protein>
    <recommendedName>
        <fullName evidence="1">NAD kinase</fullName>
        <ecNumber evidence="1">2.7.1.23</ecNumber>
    </recommendedName>
    <alternativeName>
        <fullName evidence="1">ATP-dependent NAD kinase</fullName>
    </alternativeName>
</protein>
<organism>
    <name type="scientific">Sodalis glossinidius (strain morsitans)</name>
    <dbReference type="NCBI Taxonomy" id="343509"/>
    <lineage>
        <taxon>Bacteria</taxon>
        <taxon>Pseudomonadati</taxon>
        <taxon>Pseudomonadota</taxon>
        <taxon>Gammaproteobacteria</taxon>
        <taxon>Enterobacterales</taxon>
        <taxon>Bruguierivoracaceae</taxon>
        <taxon>Sodalis</taxon>
    </lineage>
</organism>
<evidence type="ECO:0000255" key="1">
    <source>
        <dbReference type="HAMAP-Rule" id="MF_00361"/>
    </source>
</evidence>
<proteinExistence type="inferred from homology"/>
<reference key="1">
    <citation type="journal article" date="2006" name="Genome Res.">
        <title>Massive genome erosion and functional adaptations provide insights into the symbiotic lifestyle of Sodalis glossinidius in the tsetse host.</title>
        <authorList>
            <person name="Toh H."/>
            <person name="Weiss B.L."/>
            <person name="Perkin S.A.H."/>
            <person name="Yamashita A."/>
            <person name="Oshima K."/>
            <person name="Hattori M."/>
            <person name="Aksoy S."/>
        </authorList>
    </citation>
    <scope>NUCLEOTIDE SEQUENCE [LARGE SCALE GENOMIC DNA]</scope>
    <source>
        <strain>morsitans</strain>
    </source>
</reference>
<keyword id="KW-0067">ATP-binding</keyword>
<keyword id="KW-0963">Cytoplasm</keyword>
<keyword id="KW-0418">Kinase</keyword>
<keyword id="KW-0520">NAD</keyword>
<keyword id="KW-0521">NADP</keyword>
<keyword id="KW-0547">Nucleotide-binding</keyword>
<keyword id="KW-0808">Transferase</keyword>
<name>NADK_SODGM</name>
<comment type="function">
    <text evidence="1">Involved in the regulation of the intracellular balance of NAD and NADP, and is a key enzyme in the biosynthesis of NADP. Catalyzes specifically the phosphorylation on 2'-hydroxyl of the adenosine moiety of NAD to yield NADP.</text>
</comment>
<comment type="catalytic activity">
    <reaction evidence="1">
        <text>NAD(+) + ATP = ADP + NADP(+) + H(+)</text>
        <dbReference type="Rhea" id="RHEA:18629"/>
        <dbReference type="ChEBI" id="CHEBI:15378"/>
        <dbReference type="ChEBI" id="CHEBI:30616"/>
        <dbReference type="ChEBI" id="CHEBI:57540"/>
        <dbReference type="ChEBI" id="CHEBI:58349"/>
        <dbReference type="ChEBI" id="CHEBI:456216"/>
        <dbReference type="EC" id="2.7.1.23"/>
    </reaction>
</comment>
<comment type="cofactor">
    <cofactor evidence="1">
        <name>a divalent metal cation</name>
        <dbReference type="ChEBI" id="CHEBI:60240"/>
    </cofactor>
</comment>
<comment type="subcellular location">
    <subcellularLocation>
        <location evidence="1">Cytoplasm</location>
    </subcellularLocation>
</comment>
<comment type="similarity">
    <text evidence="1">Belongs to the NAD kinase family.</text>
</comment>